<accession>Q37547</accession>
<geneLocation type="mitochondrion"/>
<gene>
    <name type="primary">MT-CO2</name>
    <name type="synonym">COII</name>
    <name type="synonym">COX2</name>
    <name type="synonym">COXII</name>
    <name type="synonym">MTCO2</name>
</gene>
<protein>
    <recommendedName>
        <fullName>Cytochrome c oxidase subunit 2</fullName>
        <ecNumber>7.1.1.9</ecNumber>
    </recommendedName>
    <alternativeName>
        <fullName>Cytochrome c oxidase polypeptide II</fullName>
    </alternativeName>
</protein>
<organism>
    <name type="scientific">Malacothrix typica</name>
    <name type="common">Long-eared mouse</name>
    <name type="synonym">Gerbil mouse</name>
    <dbReference type="NCBI Taxonomy" id="37438"/>
    <lineage>
        <taxon>Eukaryota</taxon>
        <taxon>Metazoa</taxon>
        <taxon>Chordata</taxon>
        <taxon>Craniata</taxon>
        <taxon>Vertebrata</taxon>
        <taxon>Euteleostomi</taxon>
        <taxon>Mammalia</taxon>
        <taxon>Eutheria</taxon>
        <taxon>Euarchontoglires</taxon>
        <taxon>Glires</taxon>
        <taxon>Rodentia</taxon>
        <taxon>Myomorpha</taxon>
        <taxon>Muroidea</taxon>
        <taxon>Nesomyidae</taxon>
        <taxon>Dendromurinae</taxon>
        <taxon>Malacothrix</taxon>
    </lineage>
</organism>
<sequence>MAYPLQLGLQDATSPIMEELMNFHDHTLMIVFLISSLVLYVISSMLTTKLTHTSTMDAQEVETIWTILPAVILIMIALPSLRILYMMDEINNPVLTVKTMGHQWYWSYEYTDYEDLCFDSYMIPTTDLKPGEFRLLEVDNRVILPMELPIRMLISSEDVLHSWAIPSLGLKTDAIPGRLNQATISSNRPGLFYGQCSEICGSNHSFMPIILEMVPLKNFETWSVSMI</sequence>
<proteinExistence type="inferred from homology"/>
<dbReference type="EC" id="7.1.1.9"/>
<dbReference type="EMBL" id="U18834">
    <property type="protein sequence ID" value="AAA75616.1"/>
    <property type="molecule type" value="Genomic_DNA"/>
</dbReference>
<dbReference type="PIR" id="I49438">
    <property type="entry name" value="I49438"/>
</dbReference>
<dbReference type="SMR" id="Q37547"/>
<dbReference type="GO" id="GO:0005743">
    <property type="term" value="C:mitochondrial inner membrane"/>
    <property type="evidence" value="ECO:0007669"/>
    <property type="project" value="UniProtKB-SubCell"/>
</dbReference>
<dbReference type="GO" id="GO:0045277">
    <property type="term" value="C:respiratory chain complex IV"/>
    <property type="evidence" value="ECO:0000250"/>
    <property type="project" value="UniProtKB"/>
</dbReference>
<dbReference type="GO" id="GO:0005507">
    <property type="term" value="F:copper ion binding"/>
    <property type="evidence" value="ECO:0007669"/>
    <property type="project" value="InterPro"/>
</dbReference>
<dbReference type="GO" id="GO:0004129">
    <property type="term" value="F:cytochrome-c oxidase activity"/>
    <property type="evidence" value="ECO:0007669"/>
    <property type="project" value="UniProtKB-EC"/>
</dbReference>
<dbReference type="GO" id="GO:0042773">
    <property type="term" value="P:ATP synthesis coupled electron transport"/>
    <property type="evidence" value="ECO:0007669"/>
    <property type="project" value="TreeGrafter"/>
</dbReference>
<dbReference type="CDD" id="cd13912">
    <property type="entry name" value="CcO_II_C"/>
    <property type="match status" value="1"/>
</dbReference>
<dbReference type="FunFam" id="1.10.287.90:FF:000001">
    <property type="entry name" value="Cytochrome c oxidase subunit 2"/>
    <property type="match status" value="1"/>
</dbReference>
<dbReference type="FunFam" id="2.60.40.420:FF:000001">
    <property type="entry name" value="Cytochrome c oxidase subunit 2"/>
    <property type="match status" value="1"/>
</dbReference>
<dbReference type="Gene3D" id="1.10.287.90">
    <property type="match status" value="1"/>
</dbReference>
<dbReference type="Gene3D" id="2.60.40.420">
    <property type="entry name" value="Cupredoxins - blue copper proteins"/>
    <property type="match status" value="1"/>
</dbReference>
<dbReference type="InterPro" id="IPR045187">
    <property type="entry name" value="CcO_II"/>
</dbReference>
<dbReference type="InterPro" id="IPR002429">
    <property type="entry name" value="CcO_II-like_C"/>
</dbReference>
<dbReference type="InterPro" id="IPR034210">
    <property type="entry name" value="CcO_II_C"/>
</dbReference>
<dbReference type="InterPro" id="IPR001505">
    <property type="entry name" value="Copper_CuA"/>
</dbReference>
<dbReference type="InterPro" id="IPR008972">
    <property type="entry name" value="Cupredoxin"/>
</dbReference>
<dbReference type="InterPro" id="IPR014222">
    <property type="entry name" value="Cyt_c_oxidase_su2"/>
</dbReference>
<dbReference type="InterPro" id="IPR011759">
    <property type="entry name" value="Cyt_c_oxidase_su2_TM_dom"/>
</dbReference>
<dbReference type="InterPro" id="IPR036257">
    <property type="entry name" value="Cyt_c_oxidase_su2_TM_sf"/>
</dbReference>
<dbReference type="NCBIfam" id="TIGR02866">
    <property type="entry name" value="CoxB"/>
    <property type="match status" value="1"/>
</dbReference>
<dbReference type="PANTHER" id="PTHR22888:SF9">
    <property type="entry name" value="CYTOCHROME C OXIDASE SUBUNIT 2"/>
    <property type="match status" value="1"/>
</dbReference>
<dbReference type="PANTHER" id="PTHR22888">
    <property type="entry name" value="CYTOCHROME C OXIDASE, SUBUNIT II"/>
    <property type="match status" value="1"/>
</dbReference>
<dbReference type="Pfam" id="PF00116">
    <property type="entry name" value="COX2"/>
    <property type="match status" value="1"/>
</dbReference>
<dbReference type="Pfam" id="PF02790">
    <property type="entry name" value="COX2_TM"/>
    <property type="match status" value="1"/>
</dbReference>
<dbReference type="PRINTS" id="PR01166">
    <property type="entry name" value="CYCOXIDASEII"/>
</dbReference>
<dbReference type="SUPFAM" id="SSF49503">
    <property type="entry name" value="Cupredoxins"/>
    <property type="match status" value="1"/>
</dbReference>
<dbReference type="SUPFAM" id="SSF81464">
    <property type="entry name" value="Cytochrome c oxidase subunit II-like, transmembrane region"/>
    <property type="match status" value="1"/>
</dbReference>
<dbReference type="PROSITE" id="PS00078">
    <property type="entry name" value="COX2"/>
    <property type="match status" value="1"/>
</dbReference>
<dbReference type="PROSITE" id="PS50857">
    <property type="entry name" value="COX2_CUA"/>
    <property type="match status" value="1"/>
</dbReference>
<dbReference type="PROSITE" id="PS50999">
    <property type="entry name" value="COX2_TM"/>
    <property type="match status" value="1"/>
</dbReference>
<evidence type="ECO:0000250" key="1">
    <source>
        <dbReference type="UniProtKB" id="P00403"/>
    </source>
</evidence>
<evidence type="ECO:0000250" key="2">
    <source>
        <dbReference type="UniProtKB" id="P00410"/>
    </source>
</evidence>
<evidence type="ECO:0000250" key="3">
    <source>
        <dbReference type="UniProtKB" id="P68530"/>
    </source>
</evidence>
<evidence type="ECO:0000305" key="4"/>
<feature type="chain" id="PRO_0000254930" description="Cytochrome c oxidase subunit 2">
    <location>
        <begin position="1"/>
        <end position="227"/>
    </location>
</feature>
<feature type="topological domain" description="Mitochondrial intermembrane" evidence="3">
    <location>
        <begin position="1"/>
        <end position="14"/>
    </location>
</feature>
<feature type="transmembrane region" description="Helical; Name=I" evidence="3">
    <location>
        <begin position="15"/>
        <end position="45"/>
    </location>
</feature>
<feature type="topological domain" description="Mitochondrial matrix" evidence="3">
    <location>
        <begin position="46"/>
        <end position="59"/>
    </location>
</feature>
<feature type="transmembrane region" description="Helical; Name=II" evidence="3">
    <location>
        <begin position="60"/>
        <end position="87"/>
    </location>
</feature>
<feature type="topological domain" description="Mitochondrial intermembrane" evidence="3">
    <location>
        <begin position="88"/>
        <end position="227"/>
    </location>
</feature>
<feature type="binding site" evidence="3">
    <location>
        <position position="161"/>
    </location>
    <ligand>
        <name>Cu cation</name>
        <dbReference type="ChEBI" id="CHEBI:23378"/>
        <label>A1</label>
    </ligand>
</feature>
<feature type="binding site" evidence="3">
    <location>
        <position position="196"/>
    </location>
    <ligand>
        <name>Cu cation</name>
        <dbReference type="ChEBI" id="CHEBI:23378"/>
        <label>A1</label>
    </ligand>
</feature>
<feature type="binding site" evidence="3">
    <location>
        <position position="196"/>
    </location>
    <ligand>
        <name>Cu cation</name>
        <dbReference type="ChEBI" id="CHEBI:23378"/>
        <label>A2</label>
    </ligand>
</feature>
<feature type="binding site" evidence="3">
    <location>
        <position position="198"/>
    </location>
    <ligand>
        <name>Cu cation</name>
        <dbReference type="ChEBI" id="CHEBI:23378"/>
        <label>A2</label>
    </ligand>
</feature>
<feature type="binding site" evidence="3">
    <location>
        <position position="198"/>
    </location>
    <ligand>
        <name>Mg(2+)</name>
        <dbReference type="ChEBI" id="CHEBI:18420"/>
        <note>ligand shared with MT-CO1</note>
    </ligand>
</feature>
<feature type="binding site" evidence="3">
    <location>
        <position position="200"/>
    </location>
    <ligand>
        <name>Cu cation</name>
        <dbReference type="ChEBI" id="CHEBI:23378"/>
        <label>A1</label>
    </ligand>
</feature>
<feature type="binding site" evidence="3">
    <location>
        <position position="200"/>
    </location>
    <ligand>
        <name>Cu cation</name>
        <dbReference type="ChEBI" id="CHEBI:23378"/>
        <label>A2</label>
    </ligand>
</feature>
<feature type="binding site" evidence="3">
    <location>
        <position position="204"/>
    </location>
    <ligand>
        <name>Cu cation</name>
        <dbReference type="ChEBI" id="CHEBI:23378"/>
        <label>A2</label>
    </ligand>
</feature>
<feature type="binding site" evidence="3">
    <location>
        <position position="207"/>
    </location>
    <ligand>
        <name>Cu cation</name>
        <dbReference type="ChEBI" id="CHEBI:23378"/>
        <label>A1</label>
    </ligand>
</feature>
<comment type="function">
    <text evidence="2">Component of the cytochrome c oxidase, the last enzyme in the mitochondrial electron transport chain which drives oxidative phosphorylation. The respiratory chain contains 3 multisubunit complexes succinate dehydrogenase (complex II, CII), ubiquinol-cytochrome c oxidoreductase (cytochrome b-c1 complex, complex III, CIII) and cytochrome c oxidase (complex IV, CIV), that cooperate to transfer electrons derived from NADH and succinate to molecular oxygen, creating an electrochemical gradient over the inner membrane that drives transmembrane transport and the ATP synthase. Cytochrome c oxidase is the component of the respiratory chain that catalyzes the reduction of oxygen to water. Electrons originating from reduced cytochrome c in the intermembrane space (IMS) are transferred via the dinuclear copper A center (CU(A)) of subunit 2 and heme A of subunit 1 to the active site in subunit 1, a binuclear center (BNC) formed by heme A3 and copper B (CU(B)). The BNC reduces molecular oxygen to 2 water molecules using 4 electrons from cytochrome c in the IMS and 4 protons from the mitochondrial matrix.</text>
</comment>
<comment type="catalytic activity">
    <reaction evidence="2">
        <text>4 Fe(II)-[cytochrome c] + O2 + 8 H(+)(in) = 4 Fe(III)-[cytochrome c] + 2 H2O + 4 H(+)(out)</text>
        <dbReference type="Rhea" id="RHEA:11436"/>
        <dbReference type="Rhea" id="RHEA-COMP:10350"/>
        <dbReference type="Rhea" id="RHEA-COMP:14399"/>
        <dbReference type="ChEBI" id="CHEBI:15377"/>
        <dbReference type="ChEBI" id="CHEBI:15378"/>
        <dbReference type="ChEBI" id="CHEBI:15379"/>
        <dbReference type="ChEBI" id="CHEBI:29033"/>
        <dbReference type="ChEBI" id="CHEBI:29034"/>
        <dbReference type="EC" id="7.1.1.9"/>
    </reaction>
    <physiologicalReaction direction="left-to-right" evidence="2">
        <dbReference type="Rhea" id="RHEA:11437"/>
    </physiologicalReaction>
</comment>
<comment type="cofactor">
    <cofactor evidence="3">
        <name>Cu cation</name>
        <dbReference type="ChEBI" id="CHEBI:23378"/>
    </cofactor>
    <text evidence="3">Binds a dinuclear copper A center per subunit.</text>
</comment>
<comment type="subunit">
    <text evidence="1 3">Component of the cytochrome c oxidase (complex IV, CIV), a multisubunit enzyme composed of 14 subunits. The complex is composed of a catalytic core of 3 subunits MT-CO1, MT-CO2 and MT-CO3, encoded in the mitochondrial DNA, and 11 supernumerary subunits COX4I, COX5A, COX5B, COX6A, COX6B, COX6C, COX7A, COX7B, COX7C, COX8 and NDUFA4, which are encoded in the nuclear genome. The complex exists as a monomer or a dimer and forms supercomplexes (SCs) in the inner mitochondrial membrane with NADH-ubiquinone oxidoreductase (complex I, CI) and ubiquinol-cytochrome c oxidoreductase (cytochrome b-c1 complex, complex III, CIII), resulting in different assemblies (supercomplex SCI(1)III(2)IV(1) and megacomplex MCI(2)III(2)IV(2)) (By similarity). Found in a complex with TMEM177, COA6, COX18, COX20, SCO1 and SCO2. Interacts with TMEM177 in a COX20-dependent manner. Interacts with COX20. Interacts with COX16 (By similarity).</text>
</comment>
<comment type="subcellular location">
    <subcellularLocation>
        <location evidence="3">Mitochondrion inner membrane</location>
        <topology evidence="3">Multi-pass membrane protein</topology>
    </subcellularLocation>
</comment>
<comment type="similarity">
    <text evidence="4">Belongs to the cytochrome c oxidase subunit 2 family.</text>
</comment>
<reference key="1">
    <citation type="journal article" date="1995" name="J. Mol. Evol.">
        <title>Mammalian mitochondrial DNA evolution: a comparison of the cytochrome b and cytochrome c oxidase II genes.</title>
        <authorList>
            <person name="Honeycutt R.L."/>
            <person name="Nedbal M.A."/>
            <person name="Adkins R.M."/>
            <person name="Janecek L.L."/>
        </authorList>
    </citation>
    <scope>NUCLEOTIDE SEQUENCE [GENOMIC DNA]</scope>
</reference>
<keyword id="KW-0186">Copper</keyword>
<keyword id="KW-0249">Electron transport</keyword>
<keyword id="KW-0460">Magnesium</keyword>
<keyword id="KW-0472">Membrane</keyword>
<keyword id="KW-0479">Metal-binding</keyword>
<keyword id="KW-0496">Mitochondrion</keyword>
<keyword id="KW-0999">Mitochondrion inner membrane</keyword>
<keyword id="KW-0679">Respiratory chain</keyword>
<keyword id="KW-1278">Translocase</keyword>
<keyword id="KW-0812">Transmembrane</keyword>
<keyword id="KW-1133">Transmembrane helix</keyword>
<keyword id="KW-0813">Transport</keyword>
<name>COX2_MALTY</name>